<proteinExistence type="inferred from homology"/>
<dbReference type="EMBL" id="AE005672">
    <property type="protein sequence ID" value="AAK74404.1"/>
    <property type="molecule type" value="Genomic_DNA"/>
</dbReference>
<dbReference type="PIR" id="C95026">
    <property type="entry name" value="C95026"/>
</dbReference>
<dbReference type="RefSeq" id="WP_000245505.1">
    <property type="nucleotide sequence ID" value="NZ_CP155539.1"/>
</dbReference>
<dbReference type="SMR" id="P66632"/>
<dbReference type="PaxDb" id="170187-SP_0224"/>
<dbReference type="EnsemblBacteria" id="AAK74404">
    <property type="protein sequence ID" value="AAK74404"/>
    <property type="gene ID" value="SP_0224"/>
</dbReference>
<dbReference type="GeneID" id="45652295"/>
<dbReference type="KEGG" id="spn:SP_0224"/>
<dbReference type="eggNOG" id="COG0096">
    <property type="taxonomic scope" value="Bacteria"/>
</dbReference>
<dbReference type="PhylomeDB" id="P66632"/>
<dbReference type="BioCyc" id="SPNE170187:G1FZB-228-MONOMER"/>
<dbReference type="Proteomes" id="UP000000585">
    <property type="component" value="Chromosome"/>
</dbReference>
<dbReference type="GO" id="GO:1990904">
    <property type="term" value="C:ribonucleoprotein complex"/>
    <property type="evidence" value="ECO:0007669"/>
    <property type="project" value="UniProtKB-KW"/>
</dbReference>
<dbReference type="GO" id="GO:0005840">
    <property type="term" value="C:ribosome"/>
    <property type="evidence" value="ECO:0007669"/>
    <property type="project" value="UniProtKB-KW"/>
</dbReference>
<dbReference type="GO" id="GO:0019843">
    <property type="term" value="F:rRNA binding"/>
    <property type="evidence" value="ECO:0007669"/>
    <property type="project" value="UniProtKB-UniRule"/>
</dbReference>
<dbReference type="GO" id="GO:0003735">
    <property type="term" value="F:structural constituent of ribosome"/>
    <property type="evidence" value="ECO:0007669"/>
    <property type="project" value="InterPro"/>
</dbReference>
<dbReference type="GO" id="GO:0006412">
    <property type="term" value="P:translation"/>
    <property type="evidence" value="ECO:0007669"/>
    <property type="project" value="UniProtKB-UniRule"/>
</dbReference>
<dbReference type="FunFam" id="3.30.1370.30:FF:000002">
    <property type="entry name" value="30S ribosomal protein S8"/>
    <property type="match status" value="1"/>
</dbReference>
<dbReference type="FunFam" id="3.30.1490.10:FF:000001">
    <property type="entry name" value="30S ribosomal protein S8"/>
    <property type="match status" value="1"/>
</dbReference>
<dbReference type="Gene3D" id="3.30.1370.30">
    <property type="match status" value="1"/>
</dbReference>
<dbReference type="Gene3D" id="3.30.1490.10">
    <property type="match status" value="1"/>
</dbReference>
<dbReference type="HAMAP" id="MF_01302_B">
    <property type="entry name" value="Ribosomal_uS8_B"/>
    <property type="match status" value="1"/>
</dbReference>
<dbReference type="InterPro" id="IPR000630">
    <property type="entry name" value="Ribosomal_uS8"/>
</dbReference>
<dbReference type="InterPro" id="IPR047863">
    <property type="entry name" value="Ribosomal_uS8_CS"/>
</dbReference>
<dbReference type="InterPro" id="IPR035987">
    <property type="entry name" value="Ribosomal_uS8_sf"/>
</dbReference>
<dbReference type="NCBIfam" id="NF001109">
    <property type="entry name" value="PRK00136.1"/>
    <property type="match status" value="1"/>
</dbReference>
<dbReference type="PANTHER" id="PTHR11758">
    <property type="entry name" value="40S RIBOSOMAL PROTEIN S15A"/>
    <property type="match status" value="1"/>
</dbReference>
<dbReference type="Pfam" id="PF00410">
    <property type="entry name" value="Ribosomal_S8"/>
    <property type="match status" value="1"/>
</dbReference>
<dbReference type="SUPFAM" id="SSF56047">
    <property type="entry name" value="Ribosomal protein S8"/>
    <property type="match status" value="1"/>
</dbReference>
<dbReference type="PROSITE" id="PS00053">
    <property type="entry name" value="RIBOSOMAL_S8"/>
    <property type="match status" value="1"/>
</dbReference>
<keyword id="KW-1185">Reference proteome</keyword>
<keyword id="KW-0687">Ribonucleoprotein</keyword>
<keyword id="KW-0689">Ribosomal protein</keyword>
<keyword id="KW-0694">RNA-binding</keyword>
<keyword id="KW-0699">rRNA-binding</keyword>
<organism>
    <name type="scientific">Streptococcus pneumoniae serotype 4 (strain ATCC BAA-334 / TIGR4)</name>
    <dbReference type="NCBI Taxonomy" id="170187"/>
    <lineage>
        <taxon>Bacteria</taxon>
        <taxon>Bacillati</taxon>
        <taxon>Bacillota</taxon>
        <taxon>Bacilli</taxon>
        <taxon>Lactobacillales</taxon>
        <taxon>Streptococcaceae</taxon>
        <taxon>Streptococcus</taxon>
    </lineage>
</organism>
<feature type="chain" id="PRO_0000126496" description="Small ribosomal subunit protein uS8">
    <location>
        <begin position="1"/>
        <end position="132"/>
    </location>
</feature>
<name>RS8_STRPN</name>
<evidence type="ECO:0000255" key="1">
    <source>
        <dbReference type="HAMAP-Rule" id="MF_01302"/>
    </source>
</evidence>
<evidence type="ECO:0000305" key="2"/>
<comment type="function">
    <text evidence="1">One of the primary rRNA binding proteins, it binds directly to 16S rRNA central domain where it helps coordinate assembly of the platform of the 30S subunit.</text>
</comment>
<comment type="subunit">
    <text evidence="1">Part of the 30S ribosomal subunit. Contacts proteins S5 and S12.</text>
</comment>
<comment type="similarity">
    <text evidence="1">Belongs to the universal ribosomal protein uS8 family.</text>
</comment>
<accession>P66632</accession>
<accession>Q97SU8</accession>
<sequence length="132" mass="14754">MVMTDPIADFLTRIRNANQAKHEVLEVPASNIKKGIAEILKREGFVKNVEIIEDDKQGVIRVFLKYGPNGEKVITNLKRVSKPGLRVYKKREDLPKVLNGLGIAILSTSEGLLTDKEARQKNVGGEVIAYVW</sequence>
<gene>
    <name evidence="1" type="primary">rpsH</name>
    <name type="ordered locus">SP_0224</name>
</gene>
<protein>
    <recommendedName>
        <fullName evidence="1">Small ribosomal subunit protein uS8</fullName>
    </recommendedName>
    <alternativeName>
        <fullName evidence="2">30S ribosomal protein S8</fullName>
    </alternativeName>
</protein>
<reference key="1">
    <citation type="journal article" date="2001" name="Science">
        <title>Complete genome sequence of a virulent isolate of Streptococcus pneumoniae.</title>
        <authorList>
            <person name="Tettelin H."/>
            <person name="Nelson K.E."/>
            <person name="Paulsen I.T."/>
            <person name="Eisen J.A."/>
            <person name="Read T.D."/>
            <person name="Peterson S.N."/>
            <person name="Heidelberg J.F."/>
            <person name="DeBoy R.T."/>
            <person name="Haft D.H."/>
            <person name="Dodson R.J."/>
            <person name="Durkin A.S."/>
            <person name="Gwinn M.L."/>
            <person name="Kolonay J.F."/>
            <person name="Nelson W.C."/>
            <person name="Peterson J.D."/>
            <person name="Umayam L.A."/>
            <person name="White O."/>
            <person name="Salzberg S.L."/>
            <person name="Lewis M.R."/>
            <person name="Radune D."/>
            <person name="Holtzapple E.K."/>
            <person name="Khouri H.M."/>
            <person name="Wolf A.M."/>
            <person name="Utterback T.R."/>
            <person name="Hansen C.L."/>
            <person name="McDonald L.A."/>
            <person name="Feldblyum T.V."/>
            <person name="Angiuoli S.V."/>
            <person name="Dickinson T."/>
            <person name="Hickey E.K."/>
            <person name="Holt I.E."/>
            <person name="Loftus B.J."/>
            <person name="Yang F."/>
            <person name="Smith H.O."/>
            <person name="Venter J.C."/>
            <person name="Dougherty B.A."/>
            <person name="Morrison D.A."/>
            <person name="Hollingshead S.K."/>
            <person name="Fraser C.M."/>
        </authorList>
    </citation>
    <scope>NUCLEOTIDE SEQUENCE [LARGE SCALE GENOMIC DNA]</scope>
    <source>
        <strain>ATCC BAA-334 / TIGR4</strain>
    </source>
</reference>